<gene>
    <name evidence="5" type="primary">CotH7</name>
    <name evidence="8" type="ORF">RO3G_01117</name>
</gene>
<name>COTH7_RHIO9</name>
<comment type="function">
    <text evidence="4">Promotes invasion of host epithelial cells by adhering to receptors on the host cell surface to facilitate endocytosis of the pathogen into host cells (PubMed:32487760). Probably binds integrin ITGA3:ITGB1 via ITGB1, on the cell surface of host alveolar epithelial cells (PubMed:32487760).</text>
</comment>
<comment type="subunit">
    <text evidence="7">Interacts with host integrin beta-1 ITGB1 on the cell surface of host alveolar epithelial cells.</text>
</comment>
<comment type="subcellular location">
    <subcellularLocation>
        <location evidence="7">Cell membrane</location>
        <topology evidence="1">Lipid-anchor</topology>
        <topology evidence="1">GPI-anchor</topology>
    </subcellularLocation>
</comment>
<comment type="disruption phenotype">
    <text evidence="4">RNAi-mediated knockdown decreases invasion of human alveolar epithelial cells.</text>
</comment>
<sequence length="596" mass="66574">MKSLSFISLACLTAVHAASVTFKVIAPTAESSVQVNINGQLTQLKAQDEDIPYYTGSAELNDGQSYKYVVDGAAETFERILNGTSTKNEFFNRPITYATNIPELPNILSEGSWTRGETTDPLWDSNYVPSIFVTGKSDEMEDLITNVTKKTYQAKITFIGPENITTIENCTFGLHKPGRKHNDAKQTWVWTLPEGQYVAKRSWFKIRHMEEDPTQLREKLYADIARKMGTYANEANMVRFFINKEGMGTFNMLDDVIMYSYINAMFYNGNPPQQLGALYDGASGAAFNASGDMDSFIPNVESPLDQDALMPFSKAFAAVDFSNDDQVKAISQYFDYDQFLRFMVMEFLTADWDGYWQEQTNDGAYIDVSDNNKVYYLAQDFDATFGVNLDQERDFVNTPYTDFPTKFPGGILINKLLENPTTKATFETYLKTTVQEIFNNATLGAYVTARHNFLAPDLKWDRSIKQRSPGNIFGWTYEQTYQNLFEGVTAPGKEQGGAEWGLLEWVAAKEKAVRSSLKLSETATTSTSATIAAPATSESASQDNTSDDTDSASTSSSTLNQAAADTSSASKSAPTFYCLQLVLYLSLSFKNLYKYI</sequence>
<dbReference type="EMBL" id="CH476732">
    <property type="protein sequence ID" value="EIE76413.1"/>
    <property type="molecule type" value="Genomic_DNA"/>
</dbReference>
<dbReference type="SMR" id="I1BJN3"/>
<dbReference type="STRING" id="246409.I1BJN3"/>
<dbReference type="GlyCosmos" id="I1BJN3">
    <property type="glycosylation" value="7 sites, No reported glycans"/>
</dbReference>
<dbReference type="VEuPathDB" id="FungiDB:RO3G_01117"/>
<dbReference type="eggNOG" id="ENOG502TA22">
    <property type="taxonomic scope" value="Eukaryota"/>
</dbReference>
<dbReference type="InParanoid" id="I1BJN3"/>
<dbReference type="OMA" id="AKRNWFK"/>
<dbReference type="OrthoDB" id="25926at4827"/>
<dbReference type="Proteomes" id="UP000009138">
    <property type="component" value="Unassembled WGS sequence"/>
</dbReference>
<dbReference type="GO" id="GO:0005886">
    <property type="term" value="C:plasma membrane"/>
    <property type="evidence" value="ECO:0007669"/>
    <property type="project" value="UniProtKB-SubCell"/>
</dbReference>
<dbReference type="GO" id="GO:0098552">
    <property type="term" value="C:side of membrane"/>
    <property type="evidence" value="ECO:0007669"/>
    <property type="project" value="UniProtKB-KW"/>
</dbReference>
<dbReference type="GO" id="GO:0046789">
    <property type="term" value="F:host cell surface receptor binding"/>
    <property type="evidence" value="ECO:0000314"/>
    <property type="project" value="UniProtKB"/>
</dbReference>
<dbReference type="GO" id="GO:0044651">
    <property type="term" value="P:adhesion of symbiont to host epithelial cell"/>
    <property type="evidence" value="ECO:0000314"/>
    <property type="project" value="UniProtKB"/>
</dbReference>
<dbReference type="GO" id="GO:0044409">
    <property type="term" value="P:symbiont entry into host"/>
    <property type="evidence" value="ECO:0000314"/>
    <property type="project" value="UniProtKB"/>
</dbReference>
<dbReference type="Gene3D" id="2.60.40.10">
    <property type="entry name" value="Immunoglobulins"/>
    <property type="match status" value="1"/>
</dbReference>
<dbReference type="InterPro" id="IPR013783">
    <property type="entry name" value="Ig-like_fold"/>
</dbReference>
<dbReference type="InterPro" id="IPR014867">
    <property type="entry name" value="Spore_coat_CotH_CotH2/3/7"/>
</dbReference>
<dbReference type="PANTHER" id="PTHR40050">
    <property type="entry name" value="INNER SPORE COAT PROTEIN H"/>
    <property type="match status" value="1"/>
</dbReference>
<dbReference type="PANTHER" id="PTHR40050:SF1">
    <property type="entry name" value="INNER SPORE COAT PROTEIN H"/>
    <property type="match status" value="1"/>
</dbReference>
<dbReference type="Pfam" id="PF08757">
    <property type="entry name" value="CotH"/>
    <property type="match status" value="1"/>
</dbReference>
<reference evidence="9" key="1">
    <citation type="journal article" date="2009" name="PLoS Genet.">
        <title>Genomic analysis of the basal lineage fungus Rhizopus oryzae reveals a whole-genome duplication.</title>
        <authorList>
            <person name="Ma L.-J."/>
            <person name="Ibrahim A.S."/>
            <person name="Skory C."/>
            <person name="Grabherr M.G."/>
            <person name="Burger G."/>
            <person name="Butler M."/>
            <person name="Elias M."/>
            <person name="Idnurm A."/>
            <person name="Lang B.F."/>
            <person name="Sone T."/>
            <person name="Abe A."/>
            <person name="Calvo S.E."/>
            <person name="Corrochano L.M."/>
            <person name="Engels R."/>
            <person name="Fu J."/>
            <person name="Hansberg W."/>
            <person name="Kim J.-M."/>
            <person name="Kodira C.D."/>
            <person name="Koehrsen M.J."/>
            <person name="Liu B."/>
            <person name="Miranda-Saavedra D."/>
            <person name="O'Leary S."/>
            <person name="Ortiz-Castellanos L."/>
            <person name="Poulter R."/>
            <person name="Rodriguez-Romero J."/>
            <person name="Ruiz-Herrera J."/>
            <person name="Shen Y.-Q."/>
            <person name="Zeng Q."/>
            <person name="Galagan J."/>
            <person name="Birren B.W."/>
            <person name="Cuomo C.A."/>
            <person name="Wickes B.L."/>
        </authorList>
    </citation>
    <scope>NUCLEOTIDE SEQUENCE [LARGE SCALE GENOMIC DNA]</scope>
    <source>
        <strain evidence="9">RA 99-880 / ATCC MYA-4621 / FGSC 9543 / NRRL 43880</strain>
    </source>
</reference>
<reference evidence="6" key="2">
    <citation type="journal article" date="2020" name="MBio">
        <title>GRP78 and Integrins Play Different Roles in Host Cell Invasion during Mucormycosis.</title>
        <authorList>
            <person name="Alqarihi A."/>
            <person name="Gebremariam T."/>
            <person name="Gu Y."/>
            <person name="Swidergall M."/>
            <person name="Alkhazraji S."/>
            <person name="Soliman S.S.M."/>
            <person name="Bruno V.M."/>
            <person name="Edwards J.E. Jr."/>
            <person name="Filler S.G."/>
            <person name="Uppuluri P."/>
            <person name="Ibrahim A.S."/>
        </authorList>
    </citation>
    <scope>FUNCTION</scope>
    <scope>INTERACTION WITH HOST ITGB1</scope>
    <scope>SUBCELLULAR LOCATION</scope>
    <scope>DISRUPTION PHENOTYPE</scope>
</reference>
<keyword id="KW-1003">Cell membrane</keyword>
<keyword id="KW-0325">Glycoprotein</keyword>
<keyword id="KW-0336">GPI-anchor</keyword>
<keyword id="KW-0449">Lipoprotein</keyword>
<keyword id="KW-0472">Membrane</keyword>
<keyword id="KW-1185">Reference proteome</keyword>
<keyword id="KW-0732">Signal</keyword>
<keyword id="KW-0843">Virulence</keyword>
<evidence type="ECO:0000255" key="1"/>
<evidence type="ECO:0000255" key="2">
    <source>
        <dbReference type="PROSITE-ProRule" id="PRU00498"/>
    </source>
</evidence>
<evidence type="ECO:0000256" key="3">
    <source>
        <dbReference type="SAM" id="MobiDB-lite"/>
    </source>
</evidence>
<evidence type="ECO:0000269" key="4">
    <source>
    </source>
</evidence>
<evidence type="ECO:0000303" key="5">
    <source>
    </source>
</evidence>
<evidence type="ECO:0000305" key="6"/>
<evidence type="ECO:0000305" key="7">
    <source>
    </source>
</evidence>
<evidence type="ECO:0000312" key="8">
    <source>
        <dbReference type="EMBL" id="EIE76413.1"/>
    </source>
</evidence>
<evidence type="ECO:0000312" key="9">
    <source>
        <dbReference type="Proteomes" id="UP000009138"/>
    </source>
</evidence>
<accession>I1BJN3</accession>
<organism evidence="9">
    <name type="scientific">Rhizopus delemar (strain RA 99-880 / ATCC MYA-4621 / FGSC 9543 / NRRL 43880)</name>
    <name type="common">Mucormycosis agent</name>
    <name type="synonym">Rhizopus arrhizus var. delemar</name>
    <dbReference type="NCBI Taxonomy" id="246409"/>
    <lineage>
        <taxon>Eukaryota</taxon>
        <taxon>Fungi</taxon>
        <taxon>Fungi incertae sedis</taxon>
        <taxon>Mucoromycota</taxon>
        <taxon>Mucoromycotina</taxon>
        <taxon>Mucoromycetes</taxon>
        <taxon>Mucorales</taxon>
        <taxon>Mucorineae</taxon>
        <taxon>Rhizopodaceae</taxon>
        <taxon>Rhizopus</taxon>
    </lineage>
</organism>
<protein>
    <recommendedName>
        <fullName evidence="5">Invasin CotH7</fullName>
    </recommendedName>
    <alternativeName>
        <fullName evidence="5">Spore coat protein homolog 7</fullName>
    </alternativeName>
</protein>
<proteinExistence type="evidence at protein level"/>
<feature type="signal peptide" evidence="1">
    <location>
        <begin position="1"/>
        <end position="17"/>
    </location>
</feature>
<feature type="chain" id="PRO_5003637567" description="Invasin CotH7" evidence="1">
    <location>
        <begin position="18"/>
        <end position="596"/>
    </location>
</feature>
<feature type="propeptide" id="PRO_0000453695" description="Removed in mature form" evidence="1">
    <location>
        <begin position="568"/>
        <end position="596"/>
    </location>
</feature>
<feature type="region of interest" description="Disordered" evidence="3">
    <location>
        <begin position="528"/>
        <end position="557"/>
    </location>
</feature>
<feature type="compositionally biased region" description="Low complexity" evidence="3">
    <location>
        <begin position="528"/>
        <end position="544"/>
    </location>
</feature>
<feature type="lipid moiety-binding region" description="GPI-anchor amidated serine" evidence="1">
    <location>
        <position position="567"/>
    </location>
</feature>
<feature type="glycosylation site" description="N-linked (GlcNAc...) asparagine" evidence="2">
    <location>
        <position position="82"/>
    </location>
</feature>
<feature type="glycosylation site" description="N-linked (GlcNAc...) asparagine" evidence="2">
    <location>
        <position position="146"/>
    </location>
</feature>
<feature type="glycosylation site" description="N-linked (GlcNAc...) asparagine" evidence="2">
    <location>
        <position position="163"/>
    </location>
</feature>
<feature type="glycosylation site" description="N-linked (GlcNAc...) asparagine" evidence="2">
    <location>
        <position position="169"/>
    </location>
</feature>
<feature type="glycosylation site" description="N-linked (GlcNAc...) asparagine" evidence="2">
    <location>
        <position position="288"/>
    </location>
</feature>
<feature type="glycosylation site" description="N-linked (GlcNAc...) asparagine" evidence="2">
    <location>
        <position position="440"/>
    </location>
</feature>
<feature type="glycosylation site" description="N-linked (GlcNAc...) asparagine" evidence="2">
    <location>
        <position position="544"/>
    </location>
</feature>